<gene>
    <name evidence="1" type="primary">tmk</name>
    <name type="ordered locus">ERGA_CDS_07770</name>
</gene>
<sequence>MFITFEGIDGSGKTTQSRLLTEYLSGVYGVDNVILTREPGGTFFNESVRNLLFSTKNLDKLSELLFFIAMRREHFMKVIKPALTQQKIVICDRFIDSTIAYQGYGHGIDCKLIEELNDLVVDIYPNITFVLDSDINQSVARSNKNGYEFLDLEFYARVRDGFRDIVKRNQYRCYLITNVDATKNINEISAIYLKTIKILHAL</sequence>
<proteinExistence type="inferred from homology"/>
<comment type="function">
    <text evidence="1">Phosphorylation of dTMP to form dTDP in both de novo and salvage pathways of dTTP synthesis.</text>
</comment>
<comment type="catalytic activity">
    <reaction evidence="1">
        <text>dTMP + ATP = dTDP + ADP</text>
        <dbReference type="Rhea" id="RHEA:13517"/>
        <dbReference type="ChEBI" id="CHEBI:30616"/>
        <dbReference type="ChEBI" id="CHEBI:58369"/>
        <dbReference type="ChEBI" id="CHEBI:63528"/>
        <dbReference type="ChEBI" id="CHEBI:456216"/>
        <dbReference type="EC" id="2.7.4.9"/>
    </reaction>
</comment>
<comment type="similarity">
    <text evidence="1">Belongs to the thymidylate kinase family.</text>
</comment>
<keyword id="KW-0067">ATP-binding</keyword>
<keyword id="KW-0418">Kinase</keyword>
<keyword id="KW-0545">Nucleotide biosynthesis</keyword>
<keyword id="KW-0547">Nucleotide-binding</keyword>
<keyword id="KW-0808">Transferase</keyword>
<dbReference type="EC" id="2.7.4.9" evidence="1"/>
<dbReference type="EMBL" id="CR925677">
    <property type="protein sequence ID" value="CAI28229.1"/>
    <property type="molecule type" value="Genomic_DNA"/>
</dbReference>
<dbReference type="RefSeq" id="WP_011155424.1">
    <property type="nucleotide sequence ID" value="NC_006831.1"/>
</dbReference>
<dbReference type="SMR" id="Q5FG91"/>
<dbReference type="GeneID" id="33058441"/>
<dbReference type="KEGG" id="erg:ERGA_CDS_07770"/>
<dbReference type="HOGENOM" id="CLU_049131_0_0_5"/>
<dbReference type="OrthoDB" id="9774907at2"/>
<dbReference type="Proteomes" id="UP000000533">
    <property type="component" value="Chromosome"/>
</dbReference>
<dbReference type="GO" id="GO:0005829">
    <property type="term" value="C:cytosol"/>
    <property type="evidence" value="ECO:0007669"/>
    <property type="project" value="TreeGrafter"/>
</dbReference>
<dbReference type="GO" id="GO:0005524">
    <property type="term" value="F:ATP binding"/>
    <property type="evidence" value="ECO:0007669"/>
    <property type="project" value="UniProtKB-UniRule"/>
</dbReference>
<dbReference type="GO" id="GO:0004798">
    <property type="term" value="F:dTMP kinase activity"/>
    <property type="evidence" value="ECO:0007669"/>
    <property type="project" value="UniProtKB-UniRule"/>
</dbReference>
<dbReference type="GO" id="GO:0006233">
    <property type="term" value="P:dTDP biosynthetic process"/>
    <property type="evidence" value="ECO:0007669"/>
    <property type="project" value="InterPro"/>
</dbReference>
<dbReference type="GO" id="GO:0006235">
    <property type="term" value="P:dTTP biosynthetic process"/>
    <property type="evidence" value="ECO:0007669"/>
    <property type="project" value="UniProtKB-UniRule"/>
</dbReference>
<dbReference type="GO" id="GO:0006227">
    <property type="term" value="P:dUDP biosynthetic process"/>
    <property type="evidence" value="ECO:0007669"/>
    <property type="project" value="TreeGrafter"/>
</dbReference>
<dbReference type="CDD" id="cd01672">
    <property type="entry name" value="TMPK"/>
    <property type="match status" value="1"/>
</dbReference>
<dbReference type="FunFam" id="3.40.50.300:FF:000225">
    <property type="entry name" value="Thymidylate kinase"/>
    <property type="match status" value="1"/>
</dbReference>
<dbReference type="Gene3D" id="3.40.50.300">
    <property type="entry name" value="P-loop containing nucleotide triphosphate hydrolases"/>
    <property type="match status" value="1"/>
</dbReference>
<dbReference type="HAMAP" id="MF_00165">
    <property type="entry name" value="Thymidylate_kinase"/>
    <property type="match status" value="1"/>
</dbReference>
<dbReference type="InterPro" id="IPR027417">
    <property type="entry name" value="P-loop_NTPase"/>
</dbReference>
<dbReference type="InterPro" id="IPR039430">
    <property type="entry name" value="Thymidylate_kin-like_dom"/>
</dbReference>
<dbReference type="InterPro" id="IPR018095">
    <property type="entry name" value="Thymidylate_kin_CS"/>
</dbReference>
<dbReference type="InterPro" id="IPR018094">
    <property type="entry name" value="Thymidylate_kinase"/>
</dbReference>
<dbReference type="NCBIfam" id="TIGR00041">
    <property type="entry name" value="DTMP_kinase"/>
    <property type="match status" value="1"/>
</dbReference>
<dbReference type="PANTHER" id="PTHR10344">
    <property type="entry name" value="THYMIDYLATE KINASE"/>
    <property type="match status" value="1"/>
</dbReference>
<dbReference type="PANTHER" id="PTHR10344:SF4">
    <property type="entry name" value="UMP-CMP KINASE 2, MITOCHONDRIAL"/>
    <property type="match status" value="1"/>
</dbReference>
<dbReference type="Pfam" id="PF02223">
    <property type="entry name" value="Thymidylate_kin"/>
    <property type="match status" value="1"/>
</dbReference>
<dbReference type="SUPFAM" id="SSF52540">
    <property type="entry name" value="P-loop containing nucleoside triphosphate hydrolases"/>
    <property type="match status" value="1"/>
</dbReference>
<dbReference type="PROSITE" id="PS01331">
    <property type="entry name" value="THYMIDYLATE_KINASE"/>
    <property type="match status" value="1"/>
</dbReference>
<reference key="1">
    <citation type="journal article" date="2006" name="J. Bacteriol.">
        <title>Comparative genomic analysis of three strains of Ehrlichia ruminantium reveals an active process of genome size plasticity.</title>
        <authorList>
            <person name="Frutos R."/>
            <person name="Viari A."/>
            <person name="Ferraz C."/>
            <person name="Morgat A."/>
            <person name="Eychenie S."/>
            <person name="Kandassamy Y."/>
            <person name="Chantal I."/>
            <person name="Bensaid A."/>
            <person name="Coissac E."/>
            <person name="Vachiery N."/>
            <person name="Demaille J."/>
            <person name="Martinez D."/>
        </authorList>
    </citation>
    <scope>NUCLEOTIDE SEQUENCE [LARGE SCALE GENOMIC DNA]</scope>
    <source>
        <strain>Gardel</strain>
    </source>
</reference>
<organism>
    <name type="scientific">Ehrlichia ruminantium (strain Gardel)</name>
    <dbReference type="NCBI Taxonomy" id="302409"/>
    <lineage>
        <taxon>Bacteria</taxon>
        <taxon>Pseudomonadati</taxon>
        <taxon>Pseudomonadota</taxon>
        <taxon>Alphaproteobacteria</taxon>
        <taxon>Rickettsiales</taxon>
        <taxon>Anaplasmataceae</taxon>
        <taxon>Ehrlichia</taxon>
    </lineage>
</organism>
<accession>Q5FG91</accession>
<name>KTHY_EHRRG</name>
<evidence type="ECO:0000255" key="1">
    <source>
        <dbReference type="HAMAP-Rule" id="MF_00165"/>
    </source>
</evidence>
<protein>
    <recommendedName>
        <fullName evidence="1">Thymidylate kinase</fullName>
        <ecNumber evidence="1">2.7.4.9</ecNumber>
    </recommendedName>
    <alternativeName>
        <fullName evidence="1">dTMP kinase</fullName>
    </alternativeName>
</protein>
<feature type="chain" id="PRO_0000155272" description="Thymidylate kinase">
    <location>
        <begin position="1"/>
        <end position="202"/>
    </location>
</feature>
<feature type="binding site" evidence="1">
    <location>
        <begin position="7"/>
        <end position="14"/>
    </location>
    <ligand>
        <name>ATP</name>
        <dbReference type="ChEBI" id="CHEBI:30616"/>
    </ligand>
</feature>